<accession>Q2P4Q8</accession>
<sequence length="534" mass="58948">MSDVSNEAARRRTFAIISHPDAGKTTLTEKLLLFGGAIQMAGSVKGRKAARHATSDWMALEKERGISVTSSVMQFPYEGKIVNLLDTPGHADFGEDTYRVLTAVDSALMVIDVAKGVEERTIKLMEVCRLRDTPIMTFINKLDREGKNPIDLLDEVETVLGIQCAPVTWPIGMGQRLKGVVHLISGEVHLYEQGRNFTRQDSTIFPSLDAPGLAEKIGEQMLTELRDELELVQGASNPFDLDAYRAGQQTPVFFGSGVNNFGVQPLLDFFIEHAPPPQTRETTGRRVAPSETKLSGFVFKIQANMDPQHRDRVAFMRVCSGKFTAGMKTLHVRSGKDVKLANALTFMASDREIAAEAWPGDVIGIHNHGTISIGDTFTEGESLSFTGIPNFAPELFRRARLRDPLKLKQLQKGLAQLSEEGATQFFRPLMSNDLILGAVGVLQFDVVAYRLKDEYGVDAIFEPVSVTTARWVHCDNVKKLDEFREKNAGNLGIDAAGQLVYLAPTRVNLQLAQERAPDVRFSATREHAHAKAID</sequence>
<reference key="1">
    <citation type="journal article" date="2005" name="Jpn. Agric. Res. Q.">
        <title>Genome sequence of Xanthomonas oryzae pv. oryzae suggests contribution of large numbers of effector genes and insertion sequences to its race diversity.</title>
        <authorList>
            <person name="Ochiai H."/>
            <person name="Inoue Y."/>
            <person name="Takeya M."/>
            <person name="Sasaki A."/>
            <person name="Kaku H."/>
        </authorList>
    </citation>
    <scope>NUCLEOTIDE SEQUENCE [LARGE SCALE GENOMIC DNA]</scope>
    <source>
        <strain>MAFF 311018</strain>
    </source>
</reference>
<dbReference type="EMBL" id="AP008229">
    <property type="protein sequence ID" value="BAE68469.1"/>
    <property type="molecule type" value="Genomic_DNA"/>
</dbReference>
<dbReference type="RefSeq" id="WP_011408227.1">
    <property type="nucleotide sequence ID" value="NC_007705.1"/>
</dbReference>
<dbReference type="SMR" id="Q2P4Q8"/>
<dbReference type="KEGG" id="xom:XOO1714"/>
<dbReference type="HOGENOM" id="CLU_002794_2_1_6"/>
<dbReference type="GO" id="GO:0005829">
    <property type="term" value="C:cytosol"/>
    <property type="evidence" value="ECO:0007669"/>
    <property type="project" value="TreeGrafter"/>
</dbReference>
<dbReference type="GO" id="GO:0005525">
    <property type="term" value="F:GTP binding"/>
    <property type="evidence" value="ECO:0007669"/>
    <property type="project" value="UniProtKB-UniRule"/>
</dbReference>
<dbReference type="GO" id="GO:0003924">
    <property type="term" value="F:GTPase activity"/>
    <property type="evidence" value="ECO:0007669"/>
    <property type="project" value="InterPro"/>
</dbReference>
<dbReference type="GO" id="GO:0097216">
    <property type="term" value="F:guanosine tetraphosphate binding"/>
    <property type="evidence" value="ECO:0007669"/>
    <property type="project" value="UniProtKB-ARBA"/>
</dbReference>
<dbReference type="GO" id="GO:0016150">
    <property type="term" value="F:translation release factor activity, codon nonspecific"/>
    <property type="evidence" value="ECO:0007669"/>
    <property type="project" value="TreeGrafter"/>
</dbReference>
<dbReference type="GO" id="GO:0016149">
    <property type="term" value="F:translation release factor activity, codon specific"/>
    <property type="evidence" value="ECO:0007669"/>
    <property type="project" value="UniProtKB-UniRule"/>
</dbReference>
<dbReference type="GO" id="GO:0006449">
    <property type="term" value="P:regulation of translational termination"/>
    <property type="evidence" value="ECO:0007669"/>
    <property type="project" value="UniProtKB-UniRule"/>
</dbReference>
<dbReference type="CDD" id="cd04169">
    <property type="entry name" value="RF3"/>
    <property type="match status" value="1"/>
</dbReference>
<dbReference type="CDD" id="cd03689">
    <property type="entry name" value="RF3_II"/>
    <property type="match status" value="1"/>
</dbReference>
<dbReference type="CDD" id="cd16259">
    <property type="entry name" value="RF3_III"/>
    <property type="match status" value="1"/>
</dbReference>
<dbReference type="FunFam" id="2.40.30.10:FF:000040">
    <property type="entry name" value="Peptide chain release factor 3"/>
    <property type="match status" value="1"/>
</dbReference>
<dbReference type="FunFam" id="3.30.70.3280:FF:000001">
    <property type="entry name" value="Peptide chain release factor 3"/>
    <property type="match status" value="1"/>
</dbReference>
<dbReference type="FunFam" id="3.40.50.300:FF:000542">
    <property type="entry name" value="Peptide chain release factor 3"/>
    <property type="match status" value="1"/>
</dbReference>
<dbReference type="Gene3D" id="3.40.50.300">
    <property type="entry name" value="P-loop containing nucleotide triphosphate hydrolases"/>
    <property type="match status" value="2"/>
</dbReference>
<dbReference type="Gene3D" id="3.30.70.3280">
    <property type="entry name" value="Peptide chain release factor 3, domain III"/>
    <property type="match status" value="1"/>
</dbReference>
<dbReference type="HAMAP" id="MF_00072">
    <property type="entry name" value="Rel_fac_3"/>
    <property type="match status" value="1"/>
</dbReference>
<dbReference type="InterPro" id="IPR053905">
    <property type="entry name" value="EF-G-like_DII"/>
</dbReference>
<dbReference type="InterPro" id="IPR035647">
    <property type="entry name" value="EFG_III/V"/>
</dbReference>
<dbReference type="InterPro" id="IPR031157">
    <property type="entry name" value="G_TR_CS"/>
</dbReference>
<dbReference type="InterPro" id="IPR027417">
    <property type="entry name" value="P-loop_NTPase"/>
</dbReference>
<dbReference type="InterPro" id="IPR004548">
    <property type="entry name" value="PrfC"/>
</dbReference>
<dbReference type="InterPro" id="IPR032090">
    <property type="entry name" value="RF3_C"/>
</dbReference>
<dbReference type="InterPro" id="IPR038467">
    <property type="entry name" value="RF3_dom_3_sf"/>
</dbReference>
<dbReference type="InterPro" id="IPR041732">
    <property type="entry name" value="RF3_GTP-bd"/>
</dbReference>
<dbReference type="InterPro" id="IPR005225">
    <property type="entry name" value="Small_GTP-bd"/>
</dbReference>
<dbReference type="InterPro" id="IPR000795">
    <property type="entry name" value="T_Tr_GTP-bd_dom"/>
</dbReference>
<dbReference type="InterPro" id="IPR009000">
    <property type="entry name" value="Transl_B-barrel_sf"/>
</dbReference>
<dbReference type="NCBIfam" id="TIGR00503">
    <property type="entry name" value="prfC"/>
    <property type="match status" value="1"/>
</dbReference>
<dbReference type="NCBIfam" id="NF001964">
    <property type="entry name" value="PRK00741.1"/>
    <property type="match status" value="1"/>
</dbReference>
<dbReference type="NCBIfam" id="TIGR00231">
    <property type="entry name" value="small_GTP"/>
    <property type="match status" value="1"/>
</dbReference>
<dbReference type="PANTHER" id="PTHR43556">
    <property type="entry name" value="PEPTIDE CHAIN RELEASE FACTOR RF3"/>
    <property type="match status" value="1"/>
</dbReference>
<dbReference type="PANTHER" id="PTHR43556:SF2">
    <property type="entry name" value="PEPTIDE CHAIN RELEASE FACTOR RF3"/>
    <property type="match status" value="1"/>
</dbReference>
<dbReference type="Pfam" id="PF22042">
    <property type="entry name" value="EF-G_D2"/>
    <property type="match status" value="1"/>
</dbReference>
<dbReference type="Pfam" id="PF00009">
    <property type="entry name" value="GTP_EFTU"/>
    <property type="match status" value="1"/>
</dbReference>
<dbReference type="Pfam" id="PF16658">
    <property type="entry name" value="RF3_C"/>
    <property type="match status" value="1"/>
</dbReference>
<dbReference type="PRINTS" id="PR00315">
    <property type="entry name" value="ELONGATNFCT"/>
</dbReference>
<dbReference type="SUPFAM" id="SSF54980">
    <property type="entry name" value="EF-G C-terminal domain-like"/>
    <property type="match status" value="1"/>
</dbReference>
<dbReference type="SUPFAM" id="SSF52540">
    <property type="entry name" value="P-loop containing nucleoside triphosphate hydrolases"/>
    <property type="match status" value="1"/>
</dbReference>
<dbReference type="SUPFAM" id="SSF50447">
    <property type="entry name" value="Translation proteins"/>
    <property type="match status" value="1"/>
</dbReference>
<dbReference type="PROSITE" id="PS00301">
    <property type="entry name" value="G_TR_1"/>
    <property type="match status" value="1"/>
</dbReference>
<dbReference type="PROSITE" id="PS51722">
    <property type="entry name" value="G_TR_2"/>
    <property type="match status" value="1"/>
</dbReference>
<name>RF3_XANOM</name>
<organism>
    <name type="scientific">Xanthomonas oryzae pv. oryzae (strain MAFF 311018)</name>
    <dbReference type="NCBI Taxonomy" id="342109"/>
    <lineage>
        <taxon>Bacteria</taxon>
        <taxon>Pseudomonadati</taxon>
        <taxon>Pseudomonadota</taxon>
        <taxon>Gammaproteobacteria</taxon>
        <taxon>Lysobacterales</taxon>
        <taxon>Lysobacteraceae</taxon>
        <taxon>Xanthomonas</taxon>
    </lineage>
</organism>
<feature type="chain" id="PRO_0000242229" description="Peptide chain release factor 3">
    <location>
        <begin position="1"/>
        <end position="534"/>
    </location>
</feature>
<feature type="domain" description="tr-type G">
    <location>
        <begin position="9"/>
        <end position="278"/>
    </location>
</feature>
<feature type="binding site" evidence="1">
    <location>
        <begin position="18"/>
        <end position="25"/>
    </location>
    <ligand>
        <name>GTP</name>
        <dbReference type="ChEBI" id="CHEBI:37565"/>
    </ligand>
</feature>
<feature type="binding site" evidence="1">
    <location>
        <begin position="86"/>
        <end position="90"/>
    </location>
    <ligand>
        <name>GTP</name>
        <dbReference type="ChEBI" id="CHEBI:37565"/>
    </ligand>
</feature>
<feature type="binding site" evidence="1">
    <location>
        <begin position="140"/>
        <end position="143"/>
    </location>
    <ligand>
        <name>GTP</name>
        <dbReference type="ChEBI" id="CHEBI:37565"/>
    </ligand>
</feature>
<keyword id="KW-0963">Cytoplasm</keyword>
<keyword id="KW-0342">GTP-binding</keyword>
<keyword id="KW-0547">Nucleotide-binding</keyword>
<keyword id="KW-0648">Protein biosynthesis</keyword>
<proteinExistence type="inferred from homology"/>
<comment type="function">
    <text evidence="1">Increases the formation of ribosomal termination complexes and stimulates activities of RF-1 and RF-2. It binds guanine nucleotides and has strong preference for UGA stop codons. It may interact directly with the ribosome. The stimulation of RF-1 and RF-2 is significantly reduced by GTP and GDP, but not by GMP.</text>
</comment>
<comment type="subcellular location">
    <subcellularLocation>
        <location evidence="1">Cytoplasm</location>
    </subcellularLocation>
</comment>
<comment type="similarity">
    <text evidence="1">Belongs to the TRAFAC class translation factor GTPase superfamily. Classic translation factor GTPase family. PrfC subfamily.</text>
</comment>
<evidence type="ECO:0000255" key="1">
    <source>
        <dbReference type="HAMAP-Rule" id="MF_00072"/>
    </source>
</evidence>
<protein>
    <recommendedName>
        <fullName evidence="1">Peptide chain release factor 3</fullName>
        <shortName evidence="1">RF-3</shortName>
    </recommendedName>
</protein>
<gene>
    <name evidence="1" type="primary">prfC</name>
    <name type="ordered locus">XOO1714</name>
</gene>